<dbReference type="EC" id="1.7.5.1"/>
<dbReference type="EMBL" id="AE000516">
    <property type="protein sequence ID" value="AAK45455.1"/>
    <property type="molecule type" value="Genomic_DNA"/>
</dbReference>
<dbReference type="PIR" id="B70556">
    <property type="entry name" value="B70556"/>
</dbReference>
<dbReference type="RefSeq" id="WP_003898748.1">
    <property type="nucleotide sequence ID" value="NZ_KK341227.1"/>
</dbReference>
<dbReference type="SMR" id="P9WJQ2"/>
<dbReference type="KEGG" id="mtc:MT1198"/>
<dbReference type="PATRIC" id="fig|83331.31.peg.1298"/>
<dbReference type="HOGENOM" id="CLU_000422_14_1_11"/>
<dbReference type="Proteomes" id="UP000001020">
    <property type="component" value="Chromosome"/>
</dbReference>
<dbReference type="GO" id="GO:0009325">
    <property type="term" value="C:nitrate reductase complex"/>
    <property type="evidence" value="ECO:0007669"/>
    <property type="project" value="InterPro"/>
</dbReference>
<dbReference type="GO" id="GO:0005886">
    <property type="term" value="C:plasma membrane"/>
    <property type="evidence" value="ECO:0007669"/>
    <property type="project" value="UniProtKB-SubCell"/>
</dbReference>
<dbReference type="GO" id="GO:0051539">
    <property type="term" value="F:4 iron, 4 sulfur cluster binding"/>
    <property type="evidence" value="ECO:0007669"/>
    <property type="project" value="UniProtKB-KW"/>
</dbReference>
<dbReference type="GO" id="GO:0046872">
    <property type="term" value="F:metal ion binding"/>
    <property type="evidence" value="ECO:0007669"/>
    <property type="project" value="UniProtKB-KW"/>
</dbReference>
<dbReference type="GO" id="GO:0043546">
    <property type="term" value="F:molybdopterin cofactor binding"/>
    <property type="evidence" value="ECO:0007669"/>
    <property type="project" value="InterPro"/>
</dbReference>
<dbReference type="GO" id="GO:0160182">
    <property type="term" value="F:nitrate reductase (quinone) activity"/>
    <property type="evidence" value="ECO:0007669"/>
    <property type="project" value="UniProtKB-EC"/>
</dbReference>
<dbReference type="GO" id="GO:0042128">
    <property type="term" value="P:nitrate assimilation"/>
    <property type="evidence" value="ECO:0007669"/>
    <property type="project" value="UniProtKB-KW"/>
</dbReference>
<dbReference type="CDD" id="cd02776">
    <property type="entry name" value="MopB_CT_Nitrate-R-NarG-like"/>
    <property type="match status" value="1"/>
</dbReference>
<dbReference type="CDD" id="cd02750">
    <property type="entry name" value="MopB_Nitrate-R-NarG-like"/>
    <property type="match status" value="1"/>
</dbReference>
<dbReference type="FunFam" id="3.40.50.12440:FF:000001">
    <property type="entry name" value="Nitrate reductase subunit alpha"/>
    <property type="match status" value="1"/>
</dbReference>
<dbReference type="Gene3D" id="3.40.50.12440">
    <property type="match status" value="1"/>
</dbReference>
<dbReference type="InterPro" id="IPR009010">
    <property type="entry name" value="Asp_de-COase-like_dom_sf"/>
</dbReference>
<dbReference type="InterPro" id="IPR037943">
    <property type="entry name" value="MopB_CT_Nitrate-R-NarG-like"/>
</dbReference>
<dbReference type="InterPro" id="IPR006657">
    <property type="entry name" value="MoPterin_dinucl-bd_dom"/>
</dbReference>
<dbReference type="InterPro" id="IPR006656">
    <property type="entry name" value="Mopterin_OxRdtase"/>
</dbReference>
<dbReference type="InterPro" id="IPR006963">
    <property type="entry name" value="Mopterin_OxRdtase_4Fe-4S_dom"/>
</dbReference>
<dbReference type="InterPro" id="IPR006655">
    <property type="entry name" value="Mopterin_OxRdtase_prok_CS"/>
</dbReference>
<dbReference type="InterPro" id="IPR027467">
    <property type="entry name" value="MopterinOxRdtase_cofactor_BS"/>
</dbReference>
<dbReference type="InterPro" id="IPR006468">
    <property type="entry name" value="NarG"/>
</dbReference>
<dbReference type="InterPro" id="IPR050123">
    <property type="entry name" value="Prok_molybdopt-oxidoreductase"/>
</dbReference>
<dbReference type="NCBIfam" id="TIGR01580">
    <property type="entry name" value="narG"/>
    <property type="match status" value="1"/>
</dbReference>
<dbReference type="PANTHER" id="PTHR43105">
    <property type="entry name" value="RESPIRATORY NITRATE REDUCTASE"/>
    <property type="match status" value="1"/>
</dbReference>
<dbReference type="PANTHER" id="PTHR43105:SF2">
    <property type="entry name" value="RESPIRATORY NITRATE REDUCTASE 2 ALPHA CHAIN"/>
    <property type="match status" value="1"/>
</dbReference>
<dbReference type="Pfam" id="PF00384">
    <property type="entry name" value="Molybdopterin"/>
    <property type="match status" value="1"/>
</dbReference>
<dbReference type="Pfam" id="PF01568">
    <property type="entry name" value="Molydop_binding"/>
    <property type="match status" value="1"/>
</dbReference>
<dbReference type="SMART" id="SM00926">
    <property type="entry name" value="Molybdop_Fe4S4"/>
    <property type="match status" value="1"/>
</dbReference>
<dbReference type="SUPFAM" id="SSF50692">
    <property type="entry name" value="ADC-like"/>
    <property type="match status" value="1"/>
</dbReference>
<dbReference type="SUPFAM" id="SSF53706">
    <property type="entry name" value="Formate dehydrogenase/DMSO reductase, domains 1-3"/>
    <property type="match status" value="1"/>
</dbReference>
<dbReference type="PROSITE" id="PS51669">
    <property type="entry name" value="4FE4S_MOW_BIS_MGD"/>
    <property type="match status" value="1"/>
</dbReference>
<dbReference type="PROSITE" id="PS00551">
    <property type="entry name" value="MOLYBDOPTERIN_PROK_1"/>
    <property type="match status" value="1"/>
</dbReference>
<dbReference type="PROSITE" id="PS00490">
    <property type="entry name" value="MOLYBDOPTERIN_PROK_2"/>
    <property type="match status" value="1"/>
</dbReference>
<organism>
    <name type="scientific">Mycobacterium tuberculosis (strain CDC 1551 / Oshkosh)</name>
    <dbReference type="NCBI Taxonomy" id="83331"/>
    <lineage>
        <taxon>Bacteria</taxon>
        <taxon>Bacillati</taxon>
        <taxon>Actinomycetota</taxon>
        <taxon>Actinomycetes</taxon>
        <taxon>Mycobacteriales</taxon>
        <taxon>Mycobacteriaceae</taxon>
        <taxon>Mycobacterium</taxon>
        <taxon>Mycobacterium tuberculosis complex</taxon>
    </lineage>
</organism>
<sequence length="1232" mass="136956">MTVTPHVGGPLEELLERSGRFFTPGEFSADLRTVTRRGGREGDVFYRDRWSHDKVVRSTHGVNCTGSCSWKIYVKDGIITWETQQTDYPSVGPDRPEYEPRGCPRGASFSWYSYSPTRVRYPYARGVLVEMYREAKTRLGDPVLAWADIQADPERRRRYQQARGKGGLVRVSWAEASEMVAAAHVHTIKTYGPDRVAGFSPIPAMSMVSHAAGSRFVELIGGVMTSFYDWYADLPVASPQVFGDQTDVPESGDWWDASYLVMWGSNVPITRTPDAHWMAEARYRGAKVVVVSPDYADNTKFADEWVRCAAGTDTALAMAMGHVILSECYVRNQVPFFVDYVRRYTDLPFLIKLEKRGDLLVPGKFLTAADIGEESENAAFKPALLDELTNTVVVPQGSLGFRFGEDGVGKWNLDLGSVVPALSVEMDKAVNGDRSAELVTLPSFDTIDGHGETVSRGVPVRRAGKHLVCTVFDLMLAHYGVARAGLPGEWPTGYHDRTQQNTPAWQESITGVPAAQAIRFAKEFARNATESGGRSMIIMGGGICHWFHSDVMYRSVLALLMLTGSMGRNGGGWAHYVGQEKVRPLTGWQTMAMATDWSRPPRQVPGASYWYAHTDQWRYDGYGADKLASPVGRGRFAGKHTMDLLTSATAMGWSPFYPQFDRSSLDVADEARAAGRDVGDYVAEQLAQHKLKLSITDPDNPVNWPRVLTVWRANLIGSSGKGGEYFLRHLLGTDSNVQSDPPTDGVHPRDVVWDSDIPEGKLDLIMSIDFRMTSTTLVSDVVLPAATWYEKSDLSSTDMHPYVHSFSPAIDPPWETRSDFDAFAAIARAFSALAKRHLGTRTDVVLTALQHDTPDEMAYPDGTERDWLATGEVPVPGRTMSKLTVVERDYTAIYDKWLTLGPLIDQFGMTTKGYTVHPFREVSELAANFGVMNSGVAVGRPAITTAKRMADVILALSGTCNGRLAVEGFLELEKRTGQRLAHLAEGSEERRITYADTQARPVPVITSPEWSGSESGGRRYAPFTINIEHLKPFHTLTGRMHFYLAHDWVEELGEQLPVYRPPLDMARLFNQPELGPTDDGLGLTVRYLTPHSKWSFHSTYQDNLYMLSLSRGGPTMWMSPGDAAKINVRDNDWVEAVNANGIYVCRAIVSHRMPEGVVFVYHVQERTVDTPRTETNGKRGGNHNALTRVRIKPSHLAGGYGQHAFAFNYLGPTGNQRDEVTVVRRRSQEVRY</sequence>
<name>NARG_MYCTO</name>
<protein>
    <recommendedName>
        <fullName>Nitrate reductase alpha subunit</fullName>
        <ecNumber>1.7.5.1</ecNumber>
    </recommendedName>
</protein>
<comment type="function">
    <text evidence="1">The alpha chain is the actual site of nitrate reduction.</text>
</comment>
<comment type="catalytic activity">
    <reaction>
        <text>nitrate + a quinol = a quinone + nitrite + H2O</text>
        <dbReference type="Rhea" id="RHEA:56144"/>
        <dbReference type="ChEBI" id="CHEBI:15377"/>
        <dbReference type="ChEBI" id="CHEBI:16301"/>
        <dbReference type="ChEBI" id="CHEBI:17632"/>
        <dbReference type="ChEBI" id="CHEBI:24646"/>
        <dbReference type="ChEBI" id="CHEBI:132124"/>
        <dbReference type="EC" id="1.7.5.1"/>
    </reaction>
</comment>
<comment type="cofactor">
    <cofactor evidence="1">
        <name>[4Fe-4S] cluster</name>
        <dbReference type="ChEBI" id="CHEBI:49883"/>
    </cofactor>
    <text evidence="1">Binds 1 [4Fe-4S] cluster per subunit.</text>
</comment>
<comment type="cofactor">
    <cofactor evidence="1">
        <name>Mo-bis(molybdopterin guanine dinucleotide)</name>
        <dbReference type="ChEBI" id="CHEBI:60539"/>
    </cofactor>
    <text evidence="1">Binds 1 molybdenum-bis(molybdopterin guanine dinucleotide) (Mo-bis-MGD) cofactor per subunit.</text>
</comment>
<comment type="subcellular location">
    <subcellularLocation>
        <location evidence="1">Cell membrane</location>
        <topology evidence="1">Peripheral membrane protein</topology>
    </subcellularLocation>
</comment>
<comment type="similarity">
    <text evidence="3">Belongs to the prokaryotic molybdopterin-containing oxidoreductase family.</text>
</comment>
<gene>
    <name type="primary">narG</name>
    <name type="ordered locus">MT1198</name>
</gene>
<proteinExistence type="inferred from homology"/>
<feature type="chain" id="PRO_0000427790" description="Nitrate reductase alpha subunit">
    <location>
        <begin position="1"/>
        <end position="1232"/>
    </location>
</feature>
<feature type="domain" description="4Fe-4S Mo/W bis-MGD-type" evidence="2">
    <location>
        <begin position="53"/>
        <end position="117"/>
    </location>
</feature>
<feature type="binding site" evidence="2">
    <location>
        <position position="60"/>
    </location>
    <ligand>
        <name>[4Fe-4S] cluster</name>
        <dbReference type="ChEBI" id="CHEBI:49883"/>
    </ligand>
</feature>
<feature type="binding site" evidence="2">
    <location>
        <position position="64"/>
    </location>
    <ligand>
        <name>[4Fe-4S] cluster</name>
        <dbReference type="ChEBI" id="CHEBI:49883"/>
    </ligand>
</feature>
<feature type="binding site" evidence="2">
    <location>
        <position position="68"/>
    </location>
    <ligand>
        <name>[4Fe-4S] cluster</name>
        <dbReference type="ChEBI" id="CHEBI:49883"/>
    </ligand>
</feature>
<feature type="binding site" evidence="2">
    <location>
        <position position="103"/>
    </location>
    <ligand>
        <name>[4Fe-4S] cluster</name>
        <dbReference type="ChEBI" id="CHEBI:49883"/>
    </ligand>
</feature>
<feature type="binding site" evidence="1">
    <location>
        <position position="233"/>
    </location>
    <ligand>
        <name>Mo-bis(molybdopterin guanine dinucleotide)</name>
        <dbReference type="ChEBI" id="CHEBI:60539"/>
    </ligand>
    <ligandPart>
        <name>Mo</name>
        <dbReference type="ChEBI" id="CHEBI:28685"/>
    </ligandPart>
</feature>
<keyword id="KW-0004">4Fe-4S</keyword>
<keyword id="KW-1003">Cell membrane</keyword>
<keyword id="KW-0249">Electron transport</keyword>
<keyword id="KW-0408">Iron</keyword>
<keyword id="KW-0411">Iron-sulfur</keyword>
<keyword id="KW-0472">Membrane</keyword>
<keyword id="KW-0479">Metal-binding</keyword>
<keyword id="KW-0500">Molybdenum</keyword>
<keyword id="KW-0534">Nitrate assimilation</keyword>
<keyword id="KW-0560">Oxidoreductase</keyword>
<keyword id="KW-1185">Reference proteome</keyword>
<keyword id="KW-0813">Transport</keyword>
<reference key="1">
    <citation type="journal article" date="2002" name="J. Bacteriol.">
        <title>Whole-genome comparison of Mycobacterium tuberculosis clinical and laboratory strains.</title>
        <authorList>
            <person name="Fleischmann R.D."/>
            <person name="Alland D."/>
            <person name="Eisen J.A."/>
            <person name="Carpenter L."/>
            <person name="White O."/>
            <person name="Peterson J.D."/>
            <person name="DeBoy R.T."/>
            <person name="Dodson R.J."/>
            <person name="Gwinn M.L."/>
            <person name="Haft D.H."/>
            <person name="Hickey E.K."/>
            <person name="Kolonay J.F."/>
            <person name="Nelson W.C."/>
            <person name="Umayam L.A."/>
            <person name="Ermolaeva M.D."/>
            <person name="Salzberg S.L."/>
            <person name="Delcher A."/>
            <person name="Utterback T.R."/>
            <person name="Weidman J.F."/>
            <person name="Khouri H.M."/>
            <person name="Gill J."/>
            <person name="Mikula A."/>
            <person name="Bishai W."/>
            <person name="Jacobs W.R. Jr."/>
            <person name="Venter J.C."/>
            <person name="Fraser C.M."/>
        </authorList>
    </citation>
    <scope>NUCLEOTIDE SEQUENCE [LARGE SCALE GENOMIC DNA]</scope>
    <source>
        <strain>CDC 1551 / Oshkosh</strain>
    </source>
</reference>
<accession>P9WJQ2</accession>
<accession>L0T628</accession>
<accession>O06559</accession>
<accession>Q7D8Q9</accession>
<evidence type="ECO:0000250" key="1"/>
<evidence type="ECO:0000255" key="2">
    <source>
        <dbReference type="PROSITE-ProRule" id="PRU01004"/>
    </source>
</evidence>
<evidence type="ECO:0000305" key="3"/>